<protein>
    <recommendedName>
        <fullName evidence="1">Arginine biosynthesis bifunctional protein ArgJ</fullName>
    </recommendedName>
    <domain>
        <recommendedName>
            <fullName evidence="1">Glutamate N-acetyltransferase</fullName>
            <ecNumber evidence="1">2.3.1.35</ecNumber>
        </recommendedName>
        <alternativeName>
            <fullName evidence="1">Ornithine acetyltransferase</fullName>
            <shortName evidence="1">OATase</shortName>
        </alternativeName>
        <alternativeName>
            <fullName evidence="1">Ornithine transacetylase</fullName>
        </alternativeName>
    </domain>
    <domain>
        <recommendedName>
            <fullName evidence="1">Amino-acid acetyltransferase</fullName>
            <ecNumber evidence="1">2.3.1.1</ecNumber>
        </recommendedName>
        <alternativeName>
            <fullName evidence="1">N-acetylglutamate synthase</fullName>
            <shortName evidence="1">AGSase</shortName>
        </alternativeName>
    </domain>
    <component>
        <recommendedName>
            <fullName evidence="1">Arginine biosynthesis bifunctional protein ArgJ alpha chain</fullName>
        </recommendedName>
    </component>
    <component>
        <recommendedName>
            <fullName evidence="1">Arginine biosynthesis bifunctional protein ArgJ beta chain</fullName>
        </recommendedName>
    </component>
</protein>
<comment type="function">
    <text evidence="1">Catalyzes two activities which are involved in the cyclic version of arginine biosynthesis: the synthesis of N-acetylglutamate from glutamate and acetyl-CoA as the acetyl donor, and of ornithine by transacetylation between N(2)-acetylornithine and glutamate.</text>
</comment>
<comment type="catalytic activity">
    <reaction evidence="1">
        <text>N(2)-acetyl-L-ornithine + L-glutamate = N-acetyl-L-glutamate + L-ornithine</text>
        <dbReference type="Rhea" id="RHEA:15349"/>
        <dbReference type="ChEBI" id="CHEBI:29985"/>
        <dbReference type="ChEBI" id="CHEBI:44337"/>
        <dbReference type="ChEBI" id="CHEBI:46911"/>
        <dbReference type="ChEBI" id="CHEBI:57805"/>
        <dbReference type="EC" id="2.3.1.35"/>
    </reaction>
</comment>
<comment type="catalytic activity">
    <reaction evidence="1">
        <text>L-glutamate + acetyl-CoA = N-acetyl-L-glutamate + CoA + H(+)</text>
        <dbReference type="Rhea" id="RHEA:24292"/>
        <dbReference type="ChEBI" id="CHEBI:15378"/>
        <dbReference type="ChEBI" id="CHEBI:29985"/>
        <dbReference type="ChEBI" id="CHEBI:44337"/>
        <dbReference type="ChEBI" id="CHEBI:57287"/>
        <dbReference type="ChEBI" id="CHEBI:57288"/>
        <dbReference type="EC" id="2.3.1.1"/>
    </reaction>
</comment>
<comment type="pathway">
    <text evidence="1">Amino-acid biosynthesis; L-arginine biosynthesis; L-ornithine and N-acetyl-L-glutamate from L-glutamate and N(2)-acetyl-L-ornithine (cyclic): step 1/1.</text>
</comment>
<comment type="pathway">
    <text evidence="1">Amino-acid biosynthesis; L-arginine biosynthesis; N(2)-acetyl-L-ornithine from L-glutamate: step 1/4.</text>
</comment>
<comment type="subunit">
    <text evidence="1">Heterotetramer of two alpha and two beta chains.</text>
</comment>
<comment type="subcellular location">
    <subcellularLocation>
        <location evidence="1">Cytoplasm</location>
    </subcellularLocation>
</comment>
<comment type="similarity">
    <text evidence="1">Belongs to the ArgJ family.</text>
</comment>
<accession>Q3JNE9</accession>
<evidence type="ECO:0000255" key="1">
    <source>
        <dbReference type="HAMAP-Rule" id="MF_01106"/>
    </source>
</evidence>
<dbReference type="EC" id="2.3.1.35" evidence="1"/>
<dbReference type="EC" id="2.3.1.1" evidence="1"/>
<dbReference type="EMBL" id="CP000124">
    <property type="protein sequence ID" value="ABA49184.1"/>
    <property type="molecule type" value="Genomic_DNA"/>
</dbReference>
<dbReference type="RefSeq" id="WP_004532003.1">
    <property type="nucleotide sequence ID" value="NC_007434.1"/>
</dbReference>
<dbReference type="SMR" id="Q3JNE9"/>
<dbReference type="MEROPS" id="T05.001"/>
<dbReference type="EnsemblBacteria" id="ABA49184">
    <property type="protein sequence ID" value="ABA49184"/>
    <property type="gene ID" value="BURPS1710b_3534"/>
</dbReference>
<dbReference type="GeneID" id="93061617"/>
<dbReference type="KEGG" id="bpm:BURPS1710b_3534"/>
<dbReference type="HOGENOM" id="CLU_027172_1_0_4"/>
<dbReference type="UniPathway" id="UPA00068">
    <property type="reaction ID" value="UER00106"/>
</dbReference>
<dbReference type="UniPathway" id="UPA00068">
    <property type="reaction ID" value="UER00111"/>
</dbReference>
<dbReference type="Proteomes" id="UP000002700">
    <property type="component" value="Chromosome I"/>
</dbReference>
<dbReference type="GO" id="GO:0005737">
    <property type="term" value="C:cytoplasm"/>
    <property type="evidence" value="ECO:0007669"/>
    <property type="project" value="UniProtKB-SubCell"/>
</dbReference>
<dbReference type="GO" id="GO:0004358">
    <property type="term" value="F:glutamate N-acetyltransferase activity"/>
    <property type="evidence" value="ECO:0007669"/>
    <property type="project" value="UniProtKB-UniRule"/>
</dbReference>
<dbReference type="GO" id="GO:0004042">
    <property type="term" value="F:L-glutamate N-acetyltransferase activity"/>
    <property type="evidence" value="ECO:0007669"/>
    <property type="project" value="UniProtKB-UniRule"/>
</dbReference>
<dbReference type="GO" id="GO:0006526">
    <property type="term" value="P:L-arginine biosynthetic process"/>
    <property type="evidence" value="ECO:0007669"/>
    <property type="project" value="UniProtKB-UniRule"/>
</dbReference>
<dbReference type="GO" id="GO:0006592">
    <property type="term" value="P:ornithine biosynthetic process"/>
    <property type="evidence" value="ECO:0007669"/>
    <property type="project" value="TreeGrafter"/>
</dbReference>
<dbReference type="CDD" id="cd02152">
    <property type="entry name" value="OAT"/>
    <property type="match status" value="1"/>
</dbReference>
<dbReference type="FunFam" id="3.10.20.340:FF:000001">
    <property type="entry name" value="Arginine biosynthesis bifunctional protein ArgJ, chloroplastic"/>
    <property type="match status" value="1"/>
</dbReference>
<dbReference type="FunFam" id="3.60.70.12:FF:000001">
    <property type="entry name" value="Arginine biosynthesis bifunctional protein ArgJ, chloroplastic"/>
    <property type="match status" value="1"/>
</dbReference>
<dbReference type="Gene3D" id="3.10.20.340">
    <property type="entry name" value="ArgJ beta chain, C-terminal domain"/>
    <property type="match status" value="1"/>
</dbReference>
<dbReference type="Gene3D" id="3.60.70.12">
    <property type="entry name" value="L-amino peptidase D-ALA esterase/amidase"/>
    <property type="match status" value="1"/>
</dbReference>
<dbReference type="HAMAP" id="MF_01106">
    <property type="entry name" value="ArgJ"/>
    <property type="match status" value="1"/>
</dbReference>
<dbReference type="InterPro" id="IPR002813">
    <property type="entry name" value="Arg_biosynth_ArgJ"/>
</dbReference>
<dbReference type="InterPro" id="IPR016117">
    <property type="entry name" value="ArgJ-like_dom_sf"/>
</dbReference>
<dbReference type="InterPro" id="IPR042195">
    <property type="entry name" value="ArgJ_beta_C"/>
</dbReference>
<dbReference type="NCBIfam" id="TIGR00120">
    <property type="entry name" value="ArgJ"/>
    <property type="match status" value="1"/>
</dbReference>
<dbReference type="NCBIfam" id="NF003802">
    <property type="entry name" value="PRK05388.1"/>
    <property type="match status" value="1"/>
</dbReference>
<dbReference type="PANTHER" id="PTHR23100">
    <property type="entry name" value="ARGININE BIOSYNTHESIS BIFUNCTIONAL PROTEIN ARGJ"/>
    <property type="match status" value="1"/>
</dbReference>
<dbReference type="PANTHER" id="PTHR23100:SF0">
    <property type="entry name" value="ARGININE BIOSYNTHESIS BIFUNCTIONAL PROTEIN ARGJ, MITOCHONDRIAL"/>
    <property type="match status" value="1"/>
</dbReference>
<dbReference type="Pfam" id="PF01960">
    <property type="entry name" value="ArgJ"/>
    <property type="match status" value="1"/>
</dbReference>
<dbReference type="SUPFAM" id="SSF56266">
    <property type="entry name" value="DmpA/ArgJ-like"/>
    <property type="match status" value="1"/>
</dbReference>
<sequence length="413" mass="43061">MAVNFPSIDPAQLHPVAGVTLGWAEANIRKPNRKDVLVVSVEEGATVSGVFTENRFCAAPVTVCREHLAKVRAGGAGIRALVVNTGNANAGTGEPGLAHARETCAELARLAGIAPGQVLPFSTGVILEPLPIERLKAGLPAALANRAAANWHDAAQAIMTTDTLPKAASRQVTIDGHTITLTGISKGAGMIKPNMATMLGFLAFDAKVAQPVLDALVKDVADRSFNCITIDGDTSTNDSFILIASGKASLPQIASTDSPAYAALREAVTAVAQALAQLIVRDGEGATKFITVTVEGGKSAAECRQIAYAIGHSPLVKTAFYASDPNLGRILAAIGYAGVADLDVGKIDLYLDDVLVAKAGGRNPAYLEEDGQRVMKQSEIAVRVLLGRGDAQATIWTCDLSHDYVSINADYRS</sequence>
<organism>
    <name type="scientific">Burkholderia pseudomallei (strain 1710b)</name>
    <dbReference type="NCBI Taxonomy" id="320372"/>
    <lineage>
        <taxon>Bacteria</taxon>
        <taxon>Pseudomonadati</taxon>
        <taxon>Pseudomonadota</taxon>
        <taxon>Betaproteobacteria</taxon>
        <taxon>Burkholderiales</taxon>
        <taxon>Burkholderiaceae</taxon>
        <taxon>Burkholderia</taxon>
        <taxon>pseudomallei group</taxon>
    </lineage>
</organism>
<name>ARGJ_BURP1</name>
<feature type="chain" id="PRO_0000227210" description="Arginine biosynthesis bifunctional protein ArgJ alpha chain" evidence="1">
    <location>
        <begin position="1"/>
        <end position="196"/>
    </location>
</feature>
<feature type="chain" id="PRO_0000227211" description="Arginine biosynthesis bifunctional protein ArgJ beta chain" evidence="1">
    <location>
        <begin position="197"/>
        <end position="413"/>
    </location>
</feature>
<feature type="active site" description="Nucleophile" evidence="1">
    <location>
        <position position="197"/>
    </location>
</feature>
<feature type="binding site" evidence="1">
    <location>
        <position position="160"/>
    </location>
    <ligand>
        <name>substrate</name>
    </ligand>
</feature>
<feature type="binding site" evidence="1">
    <location>
        <position position="186"/>
    </location>
    <ligand>
        <name>substrate</name>
    </ligand>
</feature>
<feature type="binding site" evidence="1">
    <location>
        <position position="197"/>
    </location>
    <ligand>
        <name>substrate</name>
    </ligand>
</feature>
<feature type="binding site" evidence="1">
    <location>
        <position position="284"/>
    </location>
    <ligand>
        <name>substrate</name>
    </ligand>
</feature>
<feature type="binding site" evidence="1">
    <location>
        <position position="408"/>
    </location>
    <ligand>
        <name>substrate</name>
    </ligand>
</feature>
<feature type="binding site" evidence="1">
    <location>
        <position position="413"/>
    </location>
    <ligand>
        <name>substrate</name>
    </ligand>
</feature>
<feature type="site" description="Involved in the stabilization of negative charge on the oxyanion by the formation of the oxyanion hole" evidence="1">
    <location>
        <position position="123"/>
    </location>
</feature>
<feature type="site" description="Involved in the stabilization of negative charge on the oxyanion by the formation of the oxyanion hole" evidence="1">
    <location>
        <position position="124"/>
    </location>
</feature>
<feature type="site" description="Cleavage; by autolysis" evidence="1">
    <location>
        <begin position="196"/>
        <end position="197"/>
    </location>
</feature>
<keyword id="KW-0012">Acyltransferase</keyword>
<keyword id="KW-0028">Amino-acid biosynthesis</keyword>
<keyword id="KW-0055">Arginine biosynthesis</keyword>
<keyword id="KW-0068">Autocatalytic cleavage</keyword>
<keyword id="KW-0963">Cytoplasm</keyword>
<keyword id="KW-0511">Multifunctional enzyme</keyword>
<keyword id="KW-0808">Transferase</keyword>
<reference key="1">
    <citation type="journal article" date="2010" name="Genome Biol. Evol.">
        <title>Continuing evolution of Burkholderia mallei through genome reduction and large-scale rearrangements.</title>
        <authorList>
            <person name="Losada L."/>
            <person name="Ronning C.M."/>
            <person name="DeShazer D."/>
            <person name="Woods D."/>
            <person name="Fedorova N."/>
            <person name="Kim H.S."/>
            <person name="Shabalina S.A."/>
            <person name="Pearson T.R."/>
            <person name="Brinkac L."/>
            <person name="Tan P."/>
            <person name="Nandi T."/>
            <person name="Crabtree J."/>
            <person name="Badger J."/>
            <person name="Beckstrom-Sternberg S."/>
            <person name="Saqib M."/>
            <person name="Schutzer S.E."/>
            <person name="Keim P."/>
            <person name="Nierman W.C."/>
        </authorList>
    </citation>
    <scope>NUCLEOTIDE SEQUENCE [LARGE SCALE GENOMIC DNA]</scope>
    <source>
        <strain>1710b</strain>
    </source>
</reference>
<proteinExistence type="inferred from homology"/>
<gene>
    <name evidence="1" type="primary">argJ</name>
    <name type="ordered locus">BURPS1710b_3534</name>
</gene>